<accession>Q8KGA4</accession>
<dbReference type="EC" id="2.3.1.234" evidence="1"/>
<dbReference type="EMBL" id="AE006470">
    <property type="protein sequence ID" value="AAM71312.1"/>
    <property type="molecule type" value="Genomic_DNA"/>
</dbReference>
<dbReference type="RefSeq" id="NP_660970.1">
    <property type="nucleotide sequence ID" value="NC_002932.3"/>
</dbReference>
<dbReference type="RefSeq" id="WP_010931758.1">
    <property type="nucleotide sequence ID" value="NC_002932.3"/>
</dbReference>
<dbReference type="SMR" id="Q8KGA4"/>
<dbReference type="STRING" id="194439.CT0064"/>
<dbReference type="EnsemblBacteria" id="AAM71312">
    <property type="protein sequence ID" value="AAM71312"/>
    <property type="gene ID" value="CT0064"/>
</dbReference>
<dbReference type="KEGG" id="cte:CT0064"/>
<dbReference type="PATRIC" id="fig|194439.7.peg.65"/>
<dbReference type="eggNOG" id="COG0533">
    <property type="taxonomic scope" value="Bacteria"/>
</dbReference>
<dbReference type="HOGENOM" id="CLU_023208_0_2_10"/>
<dbReference type="OrthoDB" id="9806197at2"/>
<dbReference type="Proteomes" id="UP000001007">
    <property type="component" value="Chromosome"/>
</dbReference>
<dbReference type="GO" id="GO:0005737">
    <property type="term" value="C:cytoplasm"/>
    <property type="evidence" value="ECO:0007669"/>
    <property type="project" value="UniProtKB-SubCell"/>
</dbReference>
<dbReference type="GO" id="GO:0005506">
    <property type="term" value="F:iron ion binding"/>
    <property type="evidence" value="ECO:0007669"/>
    <property type="project" value="UniProtKB-UniRule"/>
</dbReference>
<dbReference type="GO" id="GO:0061711">
    <property type="term" value="F:N(6)-L-threonylcarbamoyladenine synthase activity"/>
    <property type="evidence" value="ECO:0007669"/>
    <property type="project" value="UniProtKB-EC"/>
</dbReference>
<dbReference type="GO" id="GO:0002949">
    <property type="term" value="P:tRNA threonylcarbamoyladenosine modification"/>
    <property type="evidence" value="ECO:0007669"/>
    <property type="project" value="UniProtKB-UniRule"/>
</dbReference>
<dbReference type="CDD" id="cd24133">
    <property type="entry name" value="ASKHA_NBD_TsaD_bac"/>
    <property type="match status" value="1"/>
</dbReference>
<dbReference type="FunFam" id="3.30.420.40:FF:000012">
    <property type="entry name" value="tRNA N6-adenosine threonylcarbamoyltransferase"/>
    <property type="match status" value="1"/>
</dbReference>
<dbReference type="FunFam" id="3.30.420.40:FF:000040">
    <property type="entry name" value="tRNA N6-adenosine threonylcarbamoyltransferase"/>
    <property type="match status" value="1"/>
</dbReference>
<dbReference type="Gene3D" id="3.30.420.40">
    <property type="match status" value="2"/>
</dbReference>
<dbReference type="HAMAP" id="MF_01445">
    <property type="entry name" value="TsaD"/>
    <property type="match status" value="1"/>
</dbReference>
<dbReference type="InterPro" id="IPR043129">
    <property type="entry name" value="ATPase_NBD"/>
</dbReference>
<dbReference type="InterPro" id="IPR000905">
    <property type="entry name" value="Gcp-like_dom"/>
</dbReference>
<dbReference type="InterPro" id="IPR017861">
    <property type="entry name" value="KAE1/TsaD"/>
</dbReference>
<dbReference type="InterPro" id="IPR022450">
    <property type="entry name" value="TsaD"/>
</dbReference>
<dbReference type="NCBIfam" id="TIGR00329">
    <property type="entry name" value="gcp_kae1"/>
    <property type="match status" value="1"/>
</dbReference>
<dbReference type="NCBIfam" id="TIGR03723">
    <property type="entry name" value="T6A_TsaD_YgjD"/>
    <property type="match status" value="1"/>
</dbReference>
<dbReference type="PANTHER" id="PTHR11735">
    <property type="entry name" value="TRNA N6-ADENOSINE THREONYLCARBAMOYLTRANSFERASE"/>
    <property type="match status" value="1"/>
</dbReference>
<dbReference type="PANTHER" id="PTHR11735:SF6">
    <property type="entry name" value="TRNA N6-ADENOSINE THREONYLCARBAMOYLTRANSFERASE, MITOCHONDRIAL"/>
    <property type="match status" value="1"/>
</dbReference>
<dbReference type="Pfam" id="PF00814">
    <property type="entry name" value="TsaD"/>
    <property type="match status" value="1"/>
</dbReference>
<dbReference type="PRINTS" id="PR00789">
    <property type="entry name" value="OSIALOPTASE"/>
</dbReference>
<dbReference type="SUPFAM" id="SSF53067">
    <property type="entry name" value="Actin-like ATPase domain"/>
    <property type="match status" value="1"/>
</dbReference>
<reference key="1">
    <citation type="journal article" date="2002" name="Proc. Natl. Acad. Sci. U.S.A.">
        <title>The complete genome sequence of Chlorobium tepidum TLS, a photosynthetic, anaerobic, green-sulfur bacterium.</title>
        <authorList>
            <person name="Eisen J.A."/>
            <person name="Nelson K.E."/>
            <person name="Paulsen I.T."/>
            <person name="Heidelberg J.F."/>
            <person name="Wu M."/>
            <person name="Dodson R.J."/>
            <person name="DeBoy R.T."/>
            <person name="Gwinn M.L."/>
            <person name="Nelson W.C."/>
            <person name="Haft D.H."/>
            <person name="Hickey E.K."/>
            <person name="Peterson J.D."/>
            <person name="Durkin A.S."/>
            <person name="Kolonay J.F."/>
            <person name="Yang F."/>
            <person name="Holt I.E."/>
            <person name="Umayam L.A."/>
            <person name="Mason T.M."/>
            <person name="Brenner M."/>
            <person name="Shea T.P."/>
            <person name="Parksey D.S."/>
            <person name="Nierman W.C."/>
            <person name="Feldblyum T.V."/>
            <person name="Hansen C.L."/>
            <person name="Craven M.B."/>
            <person name="Radune D."/>
            <person name="Vamathevan J.J."/>
            <person name="Khouri H.M."/>
            <person name="White O."/>
            <person name="Gruber T.M."/>
            <person name="Ketchum K.A."/>
            <person name="Venter J.C."/>
            <person name="Tettelin H."/>
            <person name="Bryant D.A."/>
            <person name="Fraser C.M."/>
        </authorList>
    </citation>
    <scope>NUCLEOTIDE SEQUENCE [LARGE SCALE GENOMIC DNA]</scope>
    <source>
        <strain>ATCC 49652 / DSM 12025 / NBRC 103806 / TLS</strain>
    </source>
</reference>
<keyword id="KW-0012">Acyltransferase</keyword>
<keyword id="KW-0963">Cytoplasm</keyword>
<keyword id="KW-0408">Iron</keyword>
<keyword id="KW-0479">Metal-binding</keyword>
<keyword id="KW-1185">Reference proteome</keyword>
<keyword id="KW-0808">Transferase</keyword>
<keyword id="KW-0819">tRNA processing</keyword>
<protein>
    <recommendedName>
        <fullName evidence="1">tRNA N6-adenosine threonylcarbamoyltransferase</fullName>
        <ecNumber evidence="1">2.3.1.234</ecNumber>
    </recommendedName>
    <alternativeName>
        <fullName evidence="1">N6-L-threonylcarbamoyladenine synthase</fullName>
        <shortName evidence="1">t(6)A synthase</shortName>
    </alternativeName>
    <alternativeName>
        <fullName evidence="1">t(6)A37 threonylcarbamoyladenosine biosynthesis protein TsaD</fullName>
    </alternativeName>
    <alternativeName>
        <fullName evidence="1">tRNA threonylcarbamoyladenosine biosynthesis protein TsaD</fullName>
    </alternativeName>
</protein>
<organism>
    <name type="scientific">Chlorobaculum tepidum (strain ATCC 49652 / DSM 12025 / NBRC 103806 / TLS)</name>
    <name type="common">Chlorobium tepidum</name>
    <dbReference type="NCBI Taxonomy" id="194439"/>
    <lineage>
        <taxon>Bacteria</taxon>
        <taxon>Pseudomonadati</taxon>
        <taxon>Chlorobiota</taxon>
        <taxon>Chlorobiia</taxon>
        <taxon>Chlorobiales</taxon>
        <taxon>Chlorobiaceae</taxon>
        <taxon>Chlorobaculum</taxon>
    </lineage>
</organism>
<sequence>MNILGIETSCDETSAAVLSDGSVRSNIVSSQRCHTDFGGVVPELASREHERLIVSIVDAAITEANIAKNDLDVIAATAGPGLIGAVMVGLCFAEGLAWALGKPFVPVNHVEAHIFSPFISDEPGHREPKGDFVSLTVSGGHTLLSVVRQDLGYEVIGRTIDDAAGEAFDKTGKMLGLGYPAGPVIDRLAREGDSDFHRFPRALTASSQTSKSYRGNFDFSFSGLKTSVRTWLEAHDSEYVQKHQADLAASIQSAIVEVLVEKSVAAALLHKVNAISVAGGVSANSGLRSAMQAACDRHGIELFIPALAYSTDNAAMIATMAQLMIARGKYRIEDNSYGVAPFARFEAARKGAR</sequence>
<gene>
    <name evidence="1" type="primary">tsaD</name>
    <name type="synonym">gcp</name>
    <name type="ordered locus">CT0064</name>
</gene>
<evidence type="ECO:0000255" key="1">
    <source>
        <dbReference type="HAMAP-Rule" id="MF_01445"/>
    </source>
</evidence>
<feature type="chain" id="PRO_0000303324" description="tRNA N6-adenosine threonylcarbamoyltransferase">
    <location>
        <begin position="1"/>
        <end position="353"/>
    </location>
</feature>
<feature type="binding site" evidence="1">
    <location>
        <position position="109"/>
    </location>
    <ligand>
        <name>Fe cation</name>
        <dbReference type="ChEBI" id="CHEBI:24875"/>
    </ligand>
</feature>
<feature type="binding site" evidence="1">
    <location>
        <position position="113"/>
    </location>
    <ligand>
        <name>Fe cation</name>
        <dbReference type="ChEBI" id="CHEBI:24875"/>
    </ligand>
</feature>
<feature type="binding site" evidence="1">
    <location>
        <begin position="136"/>
        <end position="140"/>
    </location>
    <ligand>
        <name>substrate</name>
    </ligand>
</feature>
<feature type="binding site" evidence="1">
    <location>
        <position position="169"/>
    </location>
    <ligand>
        <name>substrate</name>
    </ligand>
</feature>
<feature type="binding site" evidence="1">
    <location>
        <position position="182"/>
    </location>
    <ligand>
        <name>substrate</name>
    </ligand>
</feature>
<feature type="binding site" evidence="1">
    <location>
        <position position="186"/>
    </location>
    <ligand>
        <name>substrate</name>
    </ligand>
</feature>
<feature type="binding site" evidence="1">
    <location>
        <position position="284"/>
    </location>
    <ligand>
        <name>substrate</name>
    </ligand>
</feature>
<feature type="binding site" evidence="1">
    <location>
        <position position="312"/>
    </location>
    <ligand>
        <name>Fe cation</name>
        <dbReference type="ChEBI" id="CHEBI:24875"/>
    </ligand>
</feature>
<comment type="function">
    <text evidence="1">Required for the formation of a threonylcarbamoyl group on adenosine at position 37 (t(6)A37) in tRNAs that read codons beginning with adenine. Is involved in the transfer of the threonylcarbamoyl moiety of threonylcarbamoyl-AMP (TC-AMP) to the N6 group of A37, together with TsaE and TsaB. TsaD likely plays a direct catalytic role in this reaction.</text>
</comment>
<comment type="catalytic activity">
    <reaction evidence="1">
        <text>L-threonylcarbamoyladenylate + adenosine(37) in tRNA = N(6)-L-threonylcarbamoyladenosine(37) in tRNA + AMP + H(+)</text>
        <dbReference type="Rhea" id="RHEA:37059"/>
        <dbReference type="Rhea" id="RHEA-COMP:10162"/>
        <dbReference type="Rhea" id="RHEA-COMP:10163"/>
        <dbReference type="ChEBI" id="CHEBI:15378"/>
        <dbReference type="ChEBI" id="CHEBI:73682"/>
        <dbReference type="ChEBI" id="CHEBI:74411"/>
        <dbReference type="ChEBI" id="CHEBI:74418"/>
        <dbReference type="ChEBI" id="CHEBI:456215"/>
        <dbReference type="EC" id="2.3.1.234"/>
    </reaction>
</comment>
<comment type="cofactor">
    <cofactor evidence="1">
        <name>Fe(2+)</name>
        <dbReference type="ChEBI" id="CHEBI:29033"/>
    </cofactor>
    <text evidence="1">Binds 1 Fe(2+) ion per subunit.</text>
</comment>
<comment type="subcellular location">
    <subcellularLocation>
        <location evidence="1">Cytoplasm</location>
    </subcellularLocation>
</comment>
<comment type="similarity">
    <text evidence="1">Belongs to the KAE1 / TsaD family.</text>
</comment>
<proteinExistence type="inferred from homology"/>
<name>TSAD_CHLTE</name>